<dbReference type="EMBL" id="AY100953">
    <property type="protein sequence ID" value="AAM53424.1"/>
    <property type="molecule type" value="Genomic_DNA"/>
</dbReference>
<dbReference type="SMR" id="Q7H824"/>
<dbReference type="GO" id="GO:0009539">
    <property type="term" value="C:photosystem II reaction center"/>
    <property type="evidence" value="ECO:0007669"/>
    <property type="project" value="InterPro"/>
</dbReference>
<dbReference type="GO" id="GO:0042170">
    <property type="term" value="C:plastid membrane"/>
    <property type="evidence" value="ECO:0007669"/>
    <property type="project" value="UniProtKB-SubCell"/>
</dbReference>
<dbReference type="GO" id="GO:0042651">
    <property type="term" value="C:thylakoid membrane"/>
    <property type="evidence" value="ECO:0007669"/>
    <property type="project" value="UniProtKB-UniRule"/>
</dbReference>
<dbReference type="GO" id="GO:0015979">
    <property type="term" value="P:photosynthesis"/>
    <property type="evidence" value="ECO:0007669"/>
    <property type="project" value="UniProtKB-UniRule"/>
</dbReference>
<dbReference type="HAMAP" id="MF_01317">
    <property type="entry name" value="PSII_PsbL"/>
    <property type="match status" value="1"/>
</dbReference>
<dbReference type="InterPro" id="IPR003372">
    <property type="entry name" value="PSII_PsbL"/>
</dbReference>
<dbReference type="InterPro" id="IPR037266">
    <property type="entry name" value="PSII_PsbL_sf"/>
</dbReference>
<dbReference type="NCBIfam" id="NF001972">
    <property type="entry name" value="PRK00753.1"/>
    <property type="match status" value="1"/>
</dbReference>
<dbReference type="Pfam" id="PF02419">
    <property type="entry name" value="PsbL"/>
    <property type="match status" value="1"/>
</dbReference>
<dbReference type="SUPFAM" id="SSF161017">
    <property type="entry name" value="Photosystem II reaction center protein L, PsbL"/>
    <property type="match status" value="1"/>
</dbReference>
<gene>
    <name evidence="1" type="primary">psbL</name>
</gene>
<reference key="1">
    <citation type="journal article" date="2002" name="Am. J. Bot.">
        <title>Monophyly of the Convolvulaceae and circumscription of their major lineages based on DNA sequences of multiple chloroplast loci.</title>
        <authorList>
            <person name="Stefanovic S."/>
            <person name="Krueger L."/>
            <person name="Olmstead R.G."/>
        </authorList>
        <dbReference type="AGRICOLA" id="IND23320510"/>
    </citation>
    <scope>NUCLEOTIDE SEQUENCE [GENOMIC DNA]</scope>
</reference>
<organism>
    <name type="scientific">Cuscuta sandwichiana</name>
    <name type="common">Kauna'oa</name>
    <dbReference type="NCBI Taxonomy" id="197374"/>
    <lineage>
        <taxon>Eukaryota</taxon>
        <taxon>Viridiplantae</taxon>
        <taxon>Streptophyta</taxon>
        <taxon>Embryophyta</taxon>
        <taxon>Tracheophyta</taxon>
        <taxon>Spermatophyta</taxon>
        <taxon>Magnoliopsida</taxon>
        <taxon>eudicotyledons</taxon>
        <taxon>Gunneridae</taxon>
        <taxon>Pentapetalae</taxon>
        <taxon>asterids</taxon>
        <taxon>lamiids</taxon>
        <taxon>Solanales</taxon>
        <taxon>Convolvulaceae</taxon>
        <taxon>Cuscuteae</taxon>
        <taxon>Cuscuta</taxon>
        <taxon>Cuscuta subgen. Grammica</taxon>
        <taxon>Cuscuta sect. Cleistogrammica</taxon>
    </lineage>
</organism>
<comment type="function">
    <text evidence="1">One of the components of the core complex of photosystem II (PSII). PSII is a light-driven water:plastoquinone oxidoreductase that uses light energy to abstract electrons from H(2)O, generating O(2) and a proton gradient subsequently used for ATP formation. It consists of a core antenna complex that captures photons, and an electron transfer chain that converts photonic excitation into a charge separation. This subunit is found at the monomer-monomer interface and is required for correct PSII assembly and/or dimerization.</text>
</comment>
<comment type="subunit">
    <text evidence="1">PSII is composed of 1 copy each of membrane proteins PsbA, PsbB, PsbC, PsbD, PsbE, PsbF, PsbH, PsbI, PsbJ, PsbK, PsbL, PsbM, PsbT, PsbX, PsbY, PsbZ, Psb30/Ycf12, at least 3 peripheral proteins of the oxygen-evolving complex and a large number of cofactors. It forms dimeric complexes.</text>
</comment>
<comment type="subcellular location">
    <subcellularLocation>
        <location evidence="2">Plastid membrane</location>
        <topology evidence="1">Single-pass membrane protein</topology>
    </subcellularLocation>
</comment>
<comment type="similarity">
    <text evidence="1">Belongs to the PsbL family.</text>
</comment>
<comment type="caution">
    <text evidence="2">This organism being probably non-photosynthetic, the role of this protein is uncertain.</text>
</comment>
<accession>Q7H824</accession>
<sequence>MTQQSNPNEQTVELNRTSLYWGLLLIFVLAVLFSNYFFN</sequence>
<geneLocation type="plastid"/>
<evidence type="ECO:0000255" key="1">
    <source>
        <dbReference type="HAMAP-Rule" id="MF_01317"/>
    </source>
</evidence>
<evidence type="ECO:0000305" key="2"/>
<name>PSBL_CUSSA</name>
<proteinExistence type="inferred from homology"/>
<keyword id="KW-0472">Membrane</keyword>
<keyword id="KW-0602">Photosynthesis</keyword>
<keyword id="KW-0604">Photosystem II</keyword>
<keyword id="KW-0934">Plastid</keyword>
<keyword id="KW-0674">Reaction center</keyword>
<keyword id="KW-0812">Transmembrane</keyword>
<keyword id="KW-1133">Transmembrane helix</keyword>
<protein>
    <recommendedName>
        <fullName evidence="1">Photosystem II reaction center protein L</fullName>
        <shortName evidence="1">PSII-L</shortName>
    </recommendedName>
</protein>
<feature type="chain" id="PRO_0000306230" description="Photosystem II reaction center protein L">
    <location>
        <begin position="1"/>
        <end position="39"/>
    </location>
</feature>
<feature type="transmembrane region" description="Helical" evidence="1">
    <location>
        <begin position="18"/>
        <end position="38"/>
    </location>
</feature>